<keyword id="KW-1185">Reference proteome</keyword>
<proteinExistence type="evidence at transcript level"/>
<gene>
    <name type="primary">HEATR9</name>
    <name type="ORF">QtsA-16377</name>
</gene>
<reference key="1">
    <citation type="submission" date="2005-06" db="EMBL/GenBank/DDBJ databases">
        <title>DNA sequences of macaque genes expressed in brain or testis and its evolutionary implications.</title>
        <authorList>
            <consortium name="International consortium for macaque cDNA sequencing and analysis"/>
        </authorList>
    </citation>
    <scope>NUCLEOTIDE SEQUENCE [LARGE SCALE MRNA]</scope>
    <source>
        <tissue>Testis</tissue>
    </source>
</reference>
<comment type="caution">
    <text evidence="1">Despite its name, the presence of HEAT repeat is unsure and is not confirmed by repeat-detection programs.</text>
</comment>
<name>HEAT9_MACFA</name>
<dbReference type="EMBL" id="AB168985">
    <property type="protein sequence ID" value="BAE01080.1"/>
    <property type="molecule type" value="mRNA"/>
</dbReference>
<dbReference type="RefSeq" id="NP_001270995.1">
    <property type="nucleotide sequence ID" value="NM_001284066.1"/>
</dbReference>
<dbReference type="SMR" id="Q4R744"/>
<dbReference type="STRING" id="9541.ENSMFAP00000004099"/>
<dbReference type="eggNOG" id="ENOG502S0KU">
    <property type="taxonomic scope" value="Eukaryota"/>
</dbReference>
<dbReference type="Proteomes" id="UP000233100">
    <property type="component" value="Unplaced"/>
</dbReference>
<dbReference type="Gene3D" id="1.25.10.10">
    <property type="entry name" value="Leucine-rich Repeat Variant"/>
    <property type="match status" value="2"/>
</dbReference>
<dbReference type="InterPro" id="IPR011989">
    <property type="entry name" value="ARM-like"/>
</dbReference>
<dbReference type="InterPro" id="IPR016024">
    <property type="entry name" value="ARM-type_fold"/>
</dbReference>
<dbReference type="InterPro" id="IPR052873">
    <property type="entry name" value="HEATR9"/>
</dbReference>
<dbReference type="PANTHER" id="PTHR38323">
    <property type="entry name" value="PROTEIN HEATR9"/>
    <property type="match status" value="1"/>
</dbReference>
<dbReference type="PANTHER" id="PTHR38323:SF1">
    <property type="entry name" value="PROTEIN HEATR9"/>
    <property type="match status" value="1"/>
</dbReference>
<dbReference type="SUPFAM" id="SSF48371">
    <property type="entry name" value="ARM repeat"/>
    <property type="match status" value="1"/>
</dbReference>
<evidence type="ECO:0000305" key="1"/>
<organism>
    <name type="scientific">Macaca fascicularis</name>
    <name type="common">Crab-eating macaque</name>
    <name type="synonym">Cynomolgus monkey</name>
    <dbReference type="NCBI Taxonomy" id="9541"/>
    <lineage>
        <taxon>Eukaryota</taxon>
        <taxon>Metazoa</taxon>
        <taxon>Chordata</taxon>
        <taxon>Craniata</taxon>
        <taxon>Vertebrata</taxon>
        <taxon>Euteleostomi</taxon>
        <taxon>Mammalia</taxon>
        <taxon>Eutheria</taxon>
        <taxon>Euarchontoglires</taxon>
        <taxon>Primates</taxon>
        <taxon>Haplorrhini</taxon>
        <taxon>Catarrhini</taxon>
        <taxon>Cercopithecidae</taxon>
        <taxon>Cercopithecinae</taxon>
        <taxon>Macaca</taxon>
    </lineage>
</organism>
<accession>Q4R744</accession>
<sequence>MAYEKSTDIFDISRSMFLYPWLEYPDRTKELRKAMAPVHLPLSCYQMPKEEFPPSPECWRQHPSKPNSVPYCYFNKPEIYTHWHDLYDQREEREAEKMLRKMRDDHRYIKEVHQTHIQMFHLPMSKLIIKSEMQSRPLEPTWDPLKWQRLRELTKSLESPREDEQLYAAQALGCLRISDKFVMKALQQVAQTGPEKVQYEAYRTLAILGCLNKHVIRALIKQLKEKNEGQRMETLTGLRMALNSWAAVSKDKRTQVGDEGKLVPVLQTLIKKSSSEASLEAALCLGFLRPRSNMVQEFLLQCLCQGLKTQQMKALRMLVKVMHVHSAPVIRAVLDQLCSSSVLEDRFEATQMLKTIGLEQIQAQGLEELTFNLLRRKTHNEPFLAVRQAVAQTVEELKLKPMMMNLVEAQLMNPDATARQEAVISLGVLGIRSPQVFHLLLDLLDAENRQAVKKSLQETLILCASIDPWIQNKLKNKVLSVYEAPKTNVKAEPTRFRKEPENPEELTIQDFRLAKLNPLFTAKSITKVGQKKTPAFPPYCSKPRKHRPQAIGPWQPRIKKQLRVLAEIAK</sequence>
<feature type="chain" id="PRO_0000287177" description="Protein HEATR9">
    <location>
        <begin position="1"/>
        <end position="570"/>
    </location>
</feature>
<protein>
    <recommendedName>
        <fullName>Protein HEATR9</fullName>
    </recommendedName>
    <alternativeName>
        <fullName>HEAT repeat-containing protein 9</fullName>
    </alternativeName>
</protein>